<accession>Q669E2</accession>
<sequence>MQDWDPDLYRQFEAERTRPATDLLAHITITSPQFISDLGCGPGNSTELLHRRFPDAQLVGIDHSQAMLASAQQRLPHCTFIEADIHQWRPSQPQNLIYANASLQWLTDHPHLFPSLLSQLAPRGVLAVQMPDNLDQPSHRAMREVAENGPWQQTLQEAGATRAKVLSANHYYDLLAPHAERVDIWRTTYYHPMPSAQAIVDWLRATGLRPYLAPLTEAMQLAFLQNYLAIIDKAYPARTDGRRLLAFPRLFIVAHAQR</sequence>
<gene>
    <name evidence="1" type="primary">tam</name>
    <name type="ordered locus">YPTB2545</name>
</gene>
<protein>
    <recommendedName>
        <fullName evidence="1">Trans-aconitate 2-methyltransferase</fullName>
        <ecNumber evidence="1">2.1.1.144</ecNumber>
    </recommendedName>
</protein>
<organism>
    <name type="scientific">Yersinia pseudotuberculosis serotype I (strain IP32953)</name>
    <dbReference type="NCBI Taxonomy" id="273123"/>
    <lineage>
        <taxon>Bacteria</taxon>
        <taxon>Pseudomonadati</taxon>
        <taxon>Pseudomonadota</taxon>
        <taxon>Gammaproteobacteria</taxon>
        <taxon>Enterobacterales</taxon>
        <taxon>Yersiniaceae</taxon>
        <taxon>Yersinia</taxon>
    </lineage>
</organism>
<proteinExistence type="inferred from homology"/>
<comment type="function">
    <text evidence="1">Catalyzes the S-adenosylmethionine monomethyl esterification of trans-aconitate.</text>
</comment>
<comment type="catalytic activity">
    <reaction evidence="1">
        <text>trans-aconitate + S-adenosyl-L-methionine = (E)-3-(methoxycarbonyl)pent-2-enedioate + S-adenosyl-L-homocysteine</text>
        <dbReference type="Rhea" id="RHEA:14969"/>
        <dbReference type="ChEBI" id="CHEBI:15708"/>
        <dbReference type="ChEBI" id="CHEBI:57470"/>
        <dbReference type="ChEBI" id="CHEBI:57856"/>
        <dbReference type="ChEBI" id="CHEBI:59789"/>
        <dbReference type="EC" id="2.1.1.144"/>
    </reaction>
</comment>
<comment type="subcellular location">
    <subcellularLocation>
        <location evidence="1">Cytoplasm</location>
    </subcellularLocation>
</comment>
<comment type="similarity">
    <text evidence="1">Belongs to the methyltransferase superfamily. Tam family.</text>
</comment>
<reference key="1">
    <citation type="journal article" date="2004" name="Proc. Natl. Acad. Sci. U.S.A.">
        <title>Insights into the evolution of Yersinia pestis through whole-genome comparison with Yersinia pseudotuberculosis.</title>
        <authorList>
            <person name="Chain P.S.G."/>
            <person name="Carniel E."/>
            <person name="Larimer F.W."/>
            <person name="Lamerdin J."/>
            <person name="Stoutland P.O."/>
            <person name="Regala W.M."/>
            <person name="Georgescu A.M."/>
            <person name="Vergez L.M."/>
            <person name="Land M.L."/>
            <person name="Motin V.L."/>
            <person name="Brubaker R.R."/>
            <person name="Fowler J."/>
            <person name="Hinnebusch J."/>
            <person name="Marceau M."/>
            <person name="Medigue C."/>
            <person name="Simonet M."/>
            <person name="Chenal-Francisque V."/>
            <person name="Souza B."/>
            <person name="Dacheux D."/>
            <person name="Elliott J.M."/>
            <person name="Derbise A."/>
            <person name="Hauser L.J."/>
            <person name="Garcia E."/>
        </authorList>
    </citation>
    <scope>NUCLEOTIDE SEQUENCE [LARGE SCALE GENOMIC DNA]</scope>
    <source>
        <strain>IP32953</strain>
    </source>
</reference>
<feature type="chain" id="PRO_1000056589" description="Trans-aconitate 2-methyltransferase">
    <location>
        <begin position="1"/>
        <end position="258"/>
    </location>
</feature>
<dbReference type="EC" id="2.1.1.144" evidence="1"/>
<dbReference type="EMBL" id="BX936398">
    <property type="protein sequence ID" value="CAH21783.1"/>
    <property type="molecule type" value="Genomic_DNA"/>
</dbReference>
<dbReference type="RefSeq" id="WP_002210232.1">
    <property type="nucleotide sequence ID" value="NZ_CP009712.1"/>
</dbReference>
<dbReference type="SMR" id="Q669E2"/>
<dbReference type="GeneID" id="57976176"/>
<dbReference type="KEGG" id="ypo:BZ17_4092"/>
<dbReference type="KEGG" id="yps:YPTB2545"/>
<dbReference type="PATRIC" id="fig|273123.14.peg.4305"/>
<dbReference type="Proteomes" id="UP000001011">
    <property type="component" value="Chromosome"/>
</dbReference>
<dbReference type="GO" id="GO:0005737">
    <property type="term" value="C:cytoplasm"/>
    <property type="evidence" value="ECO:0007669"/>
    <property type="project" value="UniProtKB-SubCell"/>
</dbReference>
<dbReference type="GO" id="GO:0030798">
    <property type="term" value="F:trans-aconitate 2-methyltransferase activity"/>
    <property type="evidence" value="ECO:0007669"/>
    <property type="project" value="UniProtKB-UniRule"/>
</dbReference>
<dbReference type="GO" id="GO:0032259">
    <property type="term" value="P:methylation"/>
    <property type="evidence" value="ECO:0007669"/>
    <property type="project" value="UniProtKB-KW"/>
</dbReference>
<dbReference type="CDD" id="cd02440">
    <property type="entry name" value="AdoMet_MTases"/>
    <property type="match status" value="1"/>
</dbReference>
<dbReference type="Gene3D" id="1.10.150.290">
    <property type="entry name" value="S-adenosyl-L-methionine-dependent methyltransferases"/>
    <property type="match status" value="1"/>
</dbReference>
<dbReference type="Gene3D" id="3.40.50.150">
    <property type="entry name" value="Vaccinia Virus protein VP39"/>
    <property type="match status" value="1"/>
</dbReference>
<dbReference type="HAMAP" id="MF_00560">
    <property type="entry name" value="Tran_acon_Me_trans"/>
    <property type="match status" value="1"/>
</dbReference>
<dbReference type="InterPro" id="IPR041698">
    <property type="entry name" value="Methyltransf_25"/>
</dbReference>
<dbReference type="InterPro" id="IPR029063">
    <property type="entry name" value="SAM-dependent_MTases_sf"/>
</dbReference>
<dbReference type="InterPro" id="IPR023506">
    <property type="entry name" value="Trans-aconitate_MeTrfase"/>
</dbReference>
<dbReference type="InterPro" id="IPR023149">
    <property type="entry name" value="Trans_acon_MeTrfase_C"/>
</dbReference>
<dbReference type="NCBIfam" id="NF002463">
    <property type="entry name" value="PRK01683.1"/>
    <property type="match status" value="1"/>
</dbReference>
<dbReference type="PANTHER" id="PTHR43861:SF1">
    <property type="entry name" value="TRANS-ACONITATE 2-METHYLTRANSFERASE"/>
    <property type="match status" value="1"/>
</dbReference>
<dbReference type="PANTHER" id="PTHR43861">
    <property type="entry name" value="TRANS-ACONITATE 2-METHYLTRANSFERASE-RELATED"/>
    <property type="match status" value="1"/>
</dbReference>
<dbReference type="Pfam" id="PF13649">
    <property type="entry name" value="Methyltransf_25"/>
    <property type="match status" value="1"/>
</dbReference>
<dbReference type="SUPFAM" id="SSF53335">
    <property type="entry name" value="S-adenosyl-L-methionine-dependent methyltransferases"/>
    <property type="match status" value="1"/>
</dbReference>
<keyword id="KW-0963">Cytoplasm</keyword>
<keyword id="KW-0489">Methyltransferase</keyword>
<keyword id="KW-0949">S-adenosyl-L-methionine</keyword>
<keyword id="KW-0808">Transferase</keyword>
<evidence type="ECO:0000255" key="1">
    <source>
        <dbReference type="HAMAP-Rule" id="MF_00560"/>
    </source>
</evidence>
<name>TAM_YERPS</name>